<dbReference type="EC" id="4.1.99.12" evidence="1"/>
<dbReference type="EC" id="3.5.4.25" evidence="1"/>
<dbReference type="EMBL" id="AE000512">
    <property type="protein sequence ID" value="AAD36889.1"/>
    <property type="molecule type" value="Genomic_DNA"/>
</dbReference>
<dbReference type="PIR" id="E72207">
    <property type="entry name" value="E72207"/>
</dbReference>
<dbReference type="RefSeq" id="NP_229623.1">
    <property type="nucleotide sequence ID" value="NC_000853.1"/>
</dbReference>
<dbReference type="RefSeq" id="WP_004082372.1">
    <property type="nucleotide sequence ID" value="NZ_CP011107.1"/>
</dbReference>
<dbReference type="SMR" id="Q9X2E6"/>
<dbReference type="FunCoup" id="Q9X2E6">
    <property type="interactions" value="284"/>
</dbReference>
<dbReference type="STRING" id="243274.TM_1826"/>
<dbReference type="PaxDb" id="243274-THEMA_05065"/>
<dbReference type="EnsemblBacteria" id="AAD36889">
    <property type="protein sequence ID" value="AAD36889"/>
    <property type="gene ID" value="TM_1826"/>
</dbReference>
<dbReference type="KEGG" id="tma:TM1826"/>
<dbReference type="KEGG" id="tmi:THEMA_05065"/>
<dbReference type="KEGG" id="tmm:Tmari_1836"/>
<dbReference type="KEGG" id="tmw:THMA_1871"/>
<dbReference type="eggNOG" id="COG0108">
    <property type="taxonomic scope" value="Bacteria"/>
</dbReference>
<dbReference type="eggNOG" id="COG0807">
    <property type="taxonomic scope" value="Bacteria"/>
</dbReference>
<dbReference type="InParanoid" id="Q9X2E6"/>
<dbReference type="OrthoDB" id="9793111at2"/>
<dbReference type="UniPathway" id="UPA00275">
    <property type="reaction ID" value="UER00399"/>
</dbReference>
<dbReference type="UniPathway" id="UPA00275">
    <property type="reaction ID" value="UER00400"/>
</dbReference>
<dbReference type="Proteomes" id="UP000008183">
    <property type="component" value="Chromosome"/>
</dbReference>
<dbReference type="GO" id="GO:0005829">
    <property type="term" value="C:cytosol"/>
    <property type="evidence" value="ECO:0000318"/>
    <property type="project" value="GO_Central"/>
</dbReference>
<dbReference type="GO" id="GO:0008686">
    <property type="term" value="F:3,4-dihydroxy-2-butanone-4-phosphate synthase activity"/>
    <property type="evidence" value="ECO:0007669"/>
    <property type="project" value="UniProtKB-UniRule"/>
</dbReference>
<dbReference type="GO" id="GO:0005525">
    <property type="term" value="F:GTP binding"/>
    <property type="evidence" value="ECO:0007669"/>
    <property type="project" value="UniProtKB-KW"/>
</dbReference>
<dbReference type="GO" id="GO:0003935">
    <property type="term" value="F:GTP cyclohydrolase II activity"/>
    <property type="evidence" value="ECO:0000318"/>
    <property type="project" value="GO_Central"/>
</dbReference>
<dbReference type="GO" id="GO:0000287">
    <property type="term" value="F:magnesium ion binding"/>
    <property type="evidence" value="ECO:0007669"/>
    <property type="project" value="UniProtKB-UniRule"/>
</dbReference>
<dbReference type="GO" id="GO:0030145">
    <property type="term" value="F:manganese ion binding"/>
    <property type="evidence" value="ECO:0007669"/>
    <property type="project" value="UniProtKB-UniRule"/>
</dbReference>
<dbReference type="GO" id="GO:0008270">
    <property type="term" value="F:zinc ion binding"/>
    <property type="evidence" value="ECO:0007669"/>
    <property type="project" value="UniProtKB-UniRule"/>
</dbReference>
<dbReference type="GO" id="GO:0009231">
    <property type="term" value="P:riboflavin biosynthetic process"/>
    <property type="evidence" value="ECO:0000318"/>
    <property type="project" value="GO_Central"/>
</dbReference>
<dbReference type="CDD" id="cd00641">
    <property type="entry name" value="GTP_cyclohydro2"/>
    <property type="match status" value="1"/>
</dbReference>
<dbReference type="FunFam" id="3.40.50.10990:FF:000002">
    <property type="entry name" value="GTP cyclohydrolase-2"/>
    <property type="match status" value="1"/>
</dbReference>
<dbReference type="FunFam" id="3.90.870.10:FF:000018">
    <property type="entry name" value="Riboflavin biosynthesis protein RibBA"/>
    <property type="match status" value="1"/>
</dbReference>
<dbReference type="Gene3D" id="3.90.870.10">
    <property type="entry name" value="DHBP synthase"/>
    <property type="match status" value="1"/>
</dbReference>
<dbReference type="Gene3D" id="3.40.50.10990">
    <property type="entry name" value="GTP cyclohydrolase II"/>
    <property type="match status" value="1"/>
</dbReference>
<dbReference type="HAMAP" id="MF_00179">
    <property type="entry name" value="RibA"/>
    <property type="match status" value="1"/>
</dbReference>
<dbReference type="HAMAP" id="MF_01283">
    <property type="entry name" value="RibBA"/>
    <property type="match status" value="1"/>
</dbReference>
<dbReference type="InterPro" id="IPR017945">
    <property type="entry name" value="DHBP_synth_RibB-like_a/b_dom"/>
</dbReference>
<dbReference type="InterPro" id="IPR000422">
    <property type="entry name" value="DHBP_synthase_RibB"/>
</dbReference>
<dbReference type="InterPro" id="IPR032677">
    <property type="entry name" value="GTP_cyclohydro_II"/>
</dbReference>
<dbReference type="InterPro" id="IPR000926">
    <property type="entry name" value="RibA"/>
</dbReference>
<dbReference type="InterPro" id="IPR036144">
    <property type="entry name" value="RibA-like_sf"/>
</dbReference>
<dbReference type="InterPro" id="IPR016299">
    <property type="entry name" value="Riboflavin_synth_RibBA"/>
</dbReference>
<dbReference type="NCBIfam" id="NF001591">
    <property type="entry name" value="PRK00393.1"/>
    <property type="match status" value="1"/>
</dbReference>
<dbReference type="NCBIfam" id="NF006805">
    <property type="entry name" value="PRK09318.1"/>
    <property type="match status" value="1"/>
</dbReference>
<dbReference type="NCBIfam" id="TIGR00505">
    <property type="entry name" value="ribA"/>
    <property type="match status" value="1"/>
</dbReference>
<dbReference type="PANTHER" id="PTHR21327:SF18">
    <property type="entry name" value="3,4-DIHYDROXY-2-BUTANONE 4-PHOSPHATE SYNTHASE"/>
    <property type="match status" value="1"/>
</dbReference>
<dbReference type="PANTHER" id="PTHR21327">
    <property type="entry name" value="GTP CYCLOHYDROLASE II-RELATED"/>
    <property type="match status" value="1"/>
</dbReference>
<dbReference type="Pfam" id="PF00926">
    <property type="entry name" value="DHBP_synthase"/>
    <property type="match status" value="1"/>
</dbReference>
<dbReference type="Pfam" id="PF00925">
    <property type="entry name" value="GTP_cyclohydro2"/>
    <property type="match status" value="1"/>
</dbReference>
<dbReference type="PIRSF" id="PIRSF001259">
    <property type="entry name" value="RibA"/>
    <property type="match status" value="1"/>
</dbReference>
<dbReference type="SUPFAM" id="SSF142695">
    <property type="entry name" value="RibA-like"/>
    <property type="match status" value="1"/>
</dbReference>
<dbReference type="SUPFAM" id="SSF55821">
    <property type="entry name" value="YrdC/RibB"/>
    <property type="match status" value="1"/>
</dbReference>
<keyword id="KW-0342">GTP-binding</keyword>
<keyword id="KW-0378">Hydrolase</keyword>
<keyword id="KW-0456">Lyase</keyword>
<keyword id="KW-0460">Magnesium</keyword>
<keyword id="KW-0464">Manganese</keyword>
<keyword id="KW-0479">Metal-binding</keyword>
<keyword id="KW-0511">Multifunctional enzyme</keyword>
<keyword id="KW-0547">Nucleotide-binding</keyword>
<keyword id="KW-1185">Reference proteome</keyword>
<keyword id="KW-0686">Riboflavin biosynthesis</keyword>
<keyword id="KW-0862">Zinc</keyword>
<feature type="chain" id="PRO_0000151744" description="Riboflavin biosynthesis protein RibBA">
    <location>
        <begin position="1"/>
        <end position="388"/>
    </location>
</feature>
<feature type="region of interest" description="DHBP synthase">
    <location>
        <begin position="1"/>
        <end position="186"/>
    </location>
</feature>
<feature type="region of interest" description="GTP cyclohydrolase II">
    <location>
        <begin position="187"/>
        <end position="388"/>
    </location>
</feature>
<feature type="active site" description="Proton acceptor; for GTP cyclohydrolase activity" evidence="1">
    <location>
        <position position="311"/>
    </location>
</feature>
<feature type="active site" description="Nucleophile; for GTP cyclohydrolase activity" evidence="1">
    <location>
        <position position="313"/>
    </location>
</feature>
<feature type="binding site" evidence="1">
    <location>
        <begin position="21"/>
        <end position="22"/>
    </location>
    <ligand>
        <name>D-ribulose 5-phosphate</name>
        <dbReference type="ChEBI" id="CHEBI:58121"/>
    </ligand>
</feature>
<feature type="binding site" evidence="1">
    <location>
        <position position="22"/>
    </location>
    <ligand>
        <name>Mg(2+)</name>
        <dbReference type="ChEBI" id="CHEBI:18420"/>
        <label>1</label>
    </ligand>
</feature>
<feature type="binding site" evidence="1">
    <location>
        <position position="22"/>
    </location>
    <ligand>
        <name>Mg(2+)</name>
        <dbReference type="ChEBI" id="CHEBI:18420"/>
        <label>2</label>
    </ligand>
</feature>
<feature type="binding site" evidence="1">
    <location>
        <position position="26"/>
    </location>
    <ligand>
        <name>D-ribulose 5-phosphate</name>
        <dbReference type="ChEBI" id="CHEBI:58121"/>
    </ligand>
</feature>
<feature type="binding site" evidence="1">
    <location>
        <begin position="125"/>
        <end position="129"/>
    </location>
    <ligand>
        <name>D-ribulose 5-phosphate</name>
        <dbReference type="ChEBI" id="CHEBI:58121"/>
    </ligand>
</feature>
<feature type="binding site" evidence="1">
    <location>
        <position position="128"/>
    </location>
    <ligand>
        <name>Mg(2+)</name>
        <dbReference type="ChEBI" id="CHEBI:18420"/>
        <label>2</label>
    </ligand>
</feature>
<feature type="binding site" evidence="1">
    <location>
        <position position="149"/>
    </location>
    <ligand>
        <name>D-ribulose 5-phosphate</name>
        <dbReference type="ChEBI" id="CHEBI:58121"/>
    </ligand>
</feature>
<feature type="binding site" evidence="1">
    <location>
        <begin position="235"/>
        <end position="239"/>
    </location>
    <ligand>
        <name>GTP</name>
        <dbReference type="ChEBI" id="CHEBI:37565"/>
    </ligand>
</feature>
<feature type="binding site" evidence="1">
    <location>
        <position position="240"/>
    </location>
    <ligand>
        <name>Zn(2+)</name>
        <dbReference type="ChEBI" id="CHEBI:29105"/>
        <note>catalytic</note>
    </ligand>
</feature>
<feature type="binding site" evidence="1">
    <location>
        <position position="251"/>
    </location>
    <ligand>
        <name>Zn(2+)</name>
        <dbReference type="ChEBI" id="CHEBI:29105"/>
        <note>catalytic</note>
    </ligand>
</feature>
<feature type="binding site" evidence="1">
    <location>
        <position position="253"/>
    </location>
    <ligand>
        <name>Zn(2+)</name>
        <dbReference type="ChEBI" id="CHEBI:29105"/>
        <note>catalytic</note>
    </ligand>
</feature>
<feature type="binding site" evidence="1">
    <location>
        <position position="256"/>
    </location>
    <ligand>
        <name>GTP</name>
        <dbReference type="ChEBI" id="CHEBI:37565"/>
    </ligand>
</feature>
<feature type="binding site" evidence="1">
    <location>
        <begin position="277"/>
        <end position="279"/>
    </location>
    <ligand>
        <name>GTP</name>
        <dbReference type="ChEBI" id="CHEBI:37565"/>
    </ligand>
</feature>
<feature type="binding site" evidence="1">
    <location>
        <position position="299"/>
    </location>
    <ligand>
        <name>GTP</name>
        <dbReference type="ChEBI" id="CHEBI:37565"/>
    </ligand>
</feature>
<feature type="binding site" evidence="1">
    <location>
        <position position="334"/>
    </location>
    <ligand>
        <name>GTP</name>
        <dbReference type="ChEBI" id="CHEBI:37565"/>
    </ligand>
</feature>
<feature type="binding site" evidence="1">
    <location>
        <position position="339"/>
    </location>
    <ligand>
        <name>GTP</name>
        <dbReference type="ChEBI" id="CHEBI:37565"/>
    </ligand>
</feature>
<feature type="site" description="Essential for DHBP synthase activity" evidence="1">
    <location>
        <position position="113"/>
    </location>
</feature>
<feature type="site" description="Essential for DHBP synthase activity" evidence="1">
    <location>
        <position position="149"/>
    </location>
</feature>
<protein>
    <recommendedName>
        <fullName evidence="1">Riboflavin biosynthesis protein RibBA</fullName>
    </recommendedName>
    <domain>
        <recommendedName>
            <fullName evidence="1">3,4-dihydroxy-2-butanone 4-phosphate synthase</fullName>
            <shortName evidence="1">DHBP synthase</shortName>
            <ecNumber evidence="1">4.1.99.12</ecNumber>
        </recommendedName>
    </domain>
    <domain>
        <recommendedName>
            <fullName evidence="1">GTP cyclohydrolase-2</fullName>
            <ecNumber evidence="1">3.5.4.25</ecNumber>
        </recommendedName>
        <alternativeName>
            <fullName evidence="1">GTP cyclohydrolase II</fullName>
        </alternativeName>
    </domain>
</protein>
<name>RIBBA_THEMA</name>
<gene>
    <name evidence="1" type="primary">ribBA</name>
    <name type="ordered locus">TM_1826</name>
</gene>
<sequence>MEELREAFEEGKPVILIDRNRENEADFVFPAQLITEDVVSFFVTYGKGLFCVTADEEDLLKRGFVKLSSNYGANYFVPVDWGTGTGISALERAETCRKLAEGRYFHEFRYPGHVTVIGGIGFQRRKGHTEASLEISELAGFSRHAVIVEILDEKGNSHNLDYVLKLSEKFSLPVLEMDDVWREFVKRKLLMKKKAEATLPTDFGVFKVVSFENHLDGKEHFAIVKEPLEDPVAVRIHSECVTGDVLSSLRCDCGSQLANFLRYMSAHGGILIYLRQEGRGIGLSNKIAAYSLQDKGLDTVEANRVLGFSEDERDYAPAAQILKALGIERVLLFTNNQRKTVGLEKYGIEVVETKRLYGRVTPHNRFYLSTKMKKLGHELEEIFREVNS</sequence>
<evidence type="ECO:0000255" key="1">
    <source>
        <dbReference type="HAMAP-Rule" id="MF_01283"/>
    </source>
</evidence>
<organism>
    <name type="scientific">Thermotoga maritima (strain ATCC 43589 / DSM 3109 / JCM 10099 / NBRC 100826 / MSB8)</name>
    <dbReference type="NCBI Taxonomy" id="243274"/>
    <lineage>
        <taxon>Bacteria</taxon>
        <taxon>Thermotogati</taxon>
        <taxon>Thermotogota</taxon>
        <taxon>Thermotogae</taxon>
        <taxon>Thermotogales</taxon>
        <taxon>Thermotogaceae</taxon>
        <taxon>Thermotoga</taxon>
    </lineage>
</organism>
<proteinExistence type="inferred from homology"/>
<accession>Q9X2E6</accession>
<comment type="function">
    <text evidence="1">Catalyzes the conversion of D-ribulose 5-phosphate to formate and 3,4-dihydroxy-2-butanone 4-phosphate.</text>
</comment>
<comment type="function">
    <text evidence="1">Catalyzes the conversion of GTP to 2,5-diamino-6-ribosylamino-4(3H)-pyrimidinone 5'-phosphate (DARP), formate and pyrophosphate.</text>
</comment>
<comment type="catalytic activity">
    <reaction evidence="1">
        <text>D-ribulose 5-phosphate = (2S)-2-hydroxy-3-oxobutyl phosphate + formate + H(+)</text>
        <dbReference type="Rhea" id="RHEA:18457"/>
        <dbReference type="ChEBI" id="CHEBI:15378"/>
        <dbReference type="ChEBI" id="CHEBI:15740"/>
        <dbReference type="ChEBI" id="CHEBI:58121"/>
        <dbReference type="ChEBI" id="CHEBI:58830"/>
        <dbReference type="EC" id="4.1.99.12"/>
    </reaction>
</comment>
<comment type="catalytic activity">
    <reaction evidence="1">
        <text>GTP + 4 H2O = 2,5-diamino-6-hydroxy-4-(5-phosphoribosylamino)-pyrimidine + formate + 2 phosphate + 3 H(+)</text>
        <dbReference type="Rhea" id="RHEA:23704"/>
        <dbReference type="ChEBI" id="CHEBI:15377"/>
        <dbReference type="ChEBI" id="CHEBI:15378"/>
        <dbReference type="ChEBI" id="CHEBI:15740"/>
        <dbReference type="ChEBI" id="CHEBI:37565"/>
        <dbReference type="ChEBI" id="CHEBI:43474"/>
        <dbReference type="ChEBI" id="CHEBI:58614"/>
        <dbReference type="EC" id="3.5.4.25"/>
    </reaction>
</comment>
<comment type="cofactor">
    <cofactor evidence="1">
        <name>Mg(2+)</name>
        <dbReference type="ChEBI" id="CHEBI:18420"/>
    </cofactor>
    <cofactor evidence="1">
        <name>Mn(2+)</name>
        <dbReference type="ChEBI" id="CHEBI:29035"/>
    </cofactor>
    <text evidence="1">Binds 2 divalent metal cations per subunit. Magnesium or manganese.</text>
</comment>
<comment type="cofactor">
    <cofactor evidence="1">
        <name>Zn(2+)</name>
        <dbReference type="ChEBI" id="CHEBI:29105"/>
    </cofactor>
    <text evidence="1">Binds 1 zinc ion per subunit.</text>
</comment>
<comment type="pathway">
    <text evidence="1">Cofactor biosynthesis; riboflavin biosynthesis; 2-hydroxy-3-oxobutyl phosphate from D-ribulose 5-phosphate: step 1/1.</text>
</comment>
<comment type="pathway">
    <text evidence="1">Cofactor biosynthesis; riboflavin biosynthesis; 5-amino-6-(D-ribitylamino)uracil from GTP: step 1/4.</text>
</comment>
<comment type="similarity">
    <text evidence="1">In the N-terminal section; belongs to the DHBP synthase family.</text>
</comment>
<comment type="similarity">
    <text evidence="1">In the C-terminal section; belongs to the GTP cyclohydrolase II family.</text>
</comment>
<reference key="1">
    <citation type="journal article" date="1999" name="Nature">
        <title>Evidence for lateral gene transfer between Archaea and Bacteria from genome sequence of Thermotoga maritima.</title>
        <authorList>
            <person name="Nelson K.E."/>
            <person name="Clayton R.A."/>
            <person name="Gill S.R."/>
            <person name="Gwinn M.L."/>
            <person name="Dodson R.J."/>
            <person name="Haft D.H."/>
            <person name="Hickey E.K."/>
            <person name="Peterson J.D."/>
            <person name="Nelson W.C."/>
            <person name="Ketchum K.A."/>
            <person name="McDonald L.A."/>
            <person name="Utterback T.R."/>
            <person name="Malek J.A."/>
            <person name="Linher K.D."/>
            <person name="Garrett M.M."/>
            <person name="Stewart A.M."/>
            <person name="Cotton M.D."/>
            <person name="Pratt M.S."/>
            <person name="Phillips C.A."/>
            <person name="Richardson D.L."/>
            <person name="Heidelberg J.F."/>
            <person name="Sutton G.G."/>
            <person name="Fleischmann R.D."/>
            <person name="Eisen J.A."/>
            <person name="White O."/>
            <person name="Salzberg S.L."/>
            <person name="Smith H.O."/>
            <person name="Venter J.C."/>
            <person name="Fraser C.M."/>
        </authorList>
    </citation>
    <scope>NUCLEOTIDE SEQUENCE [LARGE SCALE GENOMIC DNA]</scope>
    <source>
        <strain>ATCC 43589 / DSM 3109 / JCM 10099 / NBRC 100826 / MSB8</strain>
    </source>
</reference>